<name>JNK_SUBDO</name>
<sequence>MSSSDYYSQRVGDTVFTVQKRYTNLTNIGSGAQGVVCSAFDTVTQEKIAIKKLVKPFQNETYAKRAFRELRLMKMVDHKNIIGLKNLFTPAKSLDDFQDVYIVMELMDANLCRVIGIELDHDRMSYLLYQLLCGIKHLHSAGIIHRDLKPSNIVVKEDCSLKILDFGLARTADQTFNMTPYVVTRYYRAPEVIVGMKYKENVDIWSVGCIFAEMIRGDILLPGKDYIDQWNKVTQVLGTPPSVFFKQLSSSVRLYCESQPRYAGKSWKDLFPDDVFPNDTPEDKAKTRHGRDLLSKMLQIDPQNRITVEQALAHPYVSIWYDPAEVHAPPPKRYDHALDEQSIPLDQWKTRIYEEVKTYNS</sequence>
<gene>
    <name type="primary">JNK</name>
</gene>
<feature type="chain" id="PRO_0000186272" description="Stress-activated protein kinase JNK">
    <location>
        <begin position="1"/>
        <end position="361"/>
    </location>
</feature>
<feature type="domain" description="Protein kinase" evidence="3">
    <location>
        <begin position="22"/>
        <end position="317"/>
    </location>
</feature>
<feature type="short sequence motif" description="TXY">
    <location>
        <begin position="179"/>
        <end position="181"/>
    </location>
</feature>
<feature type="active site" description="Proton acceptor" evidence="3 4">
    <location>
        <position position="147"/>
    </location>
</feature>
<feature type="binding site" evidence="3">
    <location>
        <begin position="29"/>
        <end position="34"/>
    </location>
    <ligand>
        <name>ATP</name>
        <dbReference type="ChEBI" id="CHEBI:30616"/>
    </ligand>
</feature>
<feature type="binding site" evidence="3">
    <location>
        <position position="51"/>
    </location>
    <ligand>
        <name>ATP</name>
        <dbReference type="ChEBI" id="CHEBI:30616"/>
    </ligand>
</feature>
<feature type="modified residue" description="Phosphothreonine" evidence="1">
    <location>
        <position position="179"/>
    </location>
</feature>
<feature type="modified residue" description="Phosphotyrosine" evidence="1">
    <location>
        <position position="181"/>
    </location>
</feature>
<protein>
    <recommendedName>
        <fullName>Stress-activated protein kinase JNK</fullName>
        <ecNumber>2.7.11.24</ecNumber>
    </recommendedName>
</protein>
<evidence type="ECO:0000250" key="1"/>
<evidence type="ECO:0000250" key="2">
    <source>
        <dbReference type="UniProtKB" id="P45983"/>
    </source>
</evidence>
<evidence type="ECO:0000255" key="3">
    <source>
        <dbReference type="PROSITE-ProRule" id="PRU00159"/>
    </source>
</evidence>
<evidence type="ECO:0000255" key="4">
    <source>
        <dbReference type="PROSITE-ProRule" id="PRU10027"/>
    </source>
</evidence>
<evidence type="ECO:0000305" key="5"/>
<evidence type="ECO:0000312" key="6">
    <source>
        <dbReference type="EMBL" id="CAC38785.1"/>
    </source>
</evidence>
<proteinExistence type="evidence at transcript level"/>
<comment type="function">
    <text evidence="2">Responds to activation by environmental stress and pro-inflammatory cytokines by phosphorylating a number of transcription factors, and thus regulates transcriptional activity.</text>
</comment>
<comment type="catalytic activity">
    <reaction>
        <text>L-seryl-[protein] + ATP = O-phospho-L-seryl-[protein] + ADP + H(+)</text>
        <dbReference type="Rhea" id="RHEA:17989"/>
        <dbReference type="Rhea" id="RHEA-COMP:9863"/>
        <dbReference type="Rhea" id="RHEA-COMP:11604"/>
        <dbReference type="ChEBI" id="CHEBI:15378"/>
        <dbReference type="ChEBI" id="CHEBI:29999"/>
        <dbReference type="ChEBI" id="CHEBI:30616"/>
        <dbReference type="ChEBI" id="CHEBI:83421"/>
        <dbReference type="ChEBI" id="CHEBI:456216"/>
        <dbReference type="EC" id="2.7.11.24"/>
    </reaction>
</comment>
<comment type="catalytic activity">
    <reaction>
        <text>L-threonyl-[protein] + ATP = O-phospho-L-threonyl-[protein] + ADP + H(+)</text>
        <dbReference type="Rhea" id="RHEA:46608"/>
        <dbReference type="Rhea" id="RHEA-COMP:11060"/>
        <dbReference type="Rhea" id="RHEA-COMP:11605"/>
        <dbReference type="ChEBI" id="CHEBI:15378"/>
        <dbReference type="ChEBI" id="CHEBI:30013"/>
        <dbReference type="ChEBI" id="CHEBI:30616"/>
        <dbReference type="ChEBI" id="CHEBI:61977"/>
        <dbReference type="ChEBI" id="CHEBI:456216"/>
        <dbReference type="EC" id="2.7.11.24"/>
    </reaction>
</comment>
<comment type="cofactor">
    <cofactor evidence="2">
        <name>Mg(2+)</name>
        <dbReference type="ChEBI" id="CHEBI:18420"/>
    </cofactor>
</comment>
<comment type="activity regulation">
    <text evidence="2">Activated by threonine and tyrosine phosphorylation.</text>
</comment>
<comment type="domain">
    <text>The TXY motif contains the threonine and tyrosine residues whose phosphorylation activates the MAP kinases.</text>
</comment>
<comment type="PTM">
    <text evidence="1">Dually phosphorylated on Thr-179 and Tyr-181, which activates the enzyme.</text>
</comment>
<comment type="similarity">
    <text evidence="5">Belongs to the protein kinase superfamily. CMGC Ser/Thr protein kinase family. MAP kinase subfamily.</text>
</comment>
<keyword id="KW-0067">ATP-binding</keyword>
<keyword id="KW-0418">Kinase</keyword>
<keyword id="KW-0547">Nucleotide-binding</keyword>
<keyword id="KW-0597">Phosphoprotein</keyword>
<keyword id="KW-0723">Serine/threonine-protein kinase</keyword>
<keyword id="KW-0808">Transferase</keyword>
<reference evidence="6" key="1">
    <citation type="submission" date="2000-10" db="EMBL/GenBank/DDBJ databases">
        <title>Molecular response of the sponge Suberites domuncula to bacterial infection.</title>
        <authorList>
            <person name="Boehm M."/>
            <person name="Hentschel U."/>
            <person name="Friedrich A."/>
            <person name="Steffen R."/>
            <person name="Pahler S."/>
            <person name="Gamulin V."/>
            <person name="Mueller I.M."/>
            <person name="Mueller W.E.G."/>
        </authorList>
    </citation>
    <scope>NUCLEOTIDE SEQUENCE [MRNA]</scope>
</reference>
<reference key="2">
    <citation type="journal article" date="2002" name="Gene">
        <title>Conservation of the positions of metazoan introns from sponges to humans.</title>
        <authorList>
            <person name="Mueller W.E.G."/>
            <person name="Boehm M."/>
            <person name="Grebenjuk V.A."/>
            <person name="Skorokhod A."/>
            <person name="Mueller I.M."/>
            <person name="Gamulin V."/>
        </authorList>
    </citation>
    <scope>NUCLEOTIDE SEQUENCE [GENOMIC DNA]</scope>
</reference>
<dbReference type="EC" id="2.7.11.24"/>
<dbReference type="EMBL" id="AJ291511">
    <property type="protein sequence ID" value="CAC38785.1"/>
    <property type="molecule type" value="mRNA"/>
</dbReference>
<dbReference type="EMBL" id="AJ307673">
    <property type="protein sequence ID" value="CAC85496.1"/>
    <property type="molecule type" value="Genomic_DNA"/>
</dbReference>
<dbReference type="SMR" id="Q966Y3"/>
<dbReference type="GO" id="GO:0005524">
    <property type="term" value="F:ATP binding"/>
    <property type="evidence" value="ECO:0007669"/>
    <property type="project" value="UniProtKB-KW"/>
</dbReference>
<dbReference type="GO" id="GO:0004707">
    <property type="term" value="F:MAP kinase activity"/>
    <property type="evidence" value="ECO:0007669"/>
    <property type="project" value="UniProtKB-EC"/>
</dbReference>
<dbReference type="GO" id="GO:0106310">
    <property type="term" value="F:protein serine kinase activity"/>
    <property type="evidence" value="ECO:0007669"/>
    <property type="project" value="RHEA"/>
</dbReference>
<dbReference type="GO" id="GO:0007254">
    <property type="term" value="P:JNK cascade"/>
    <property type="evidence" value="ECO:0000250"/>
    <property type="project" value="UniProtKB"/>
</dbReference>
<dbReference type="CDD" id="cd07850">
    <property type="entry name" value="STKc_JNK"/>
    <property type="match status" value="1"/>
</dbReference>
<dbReference type="FunFam" id="1.10.510.10:FF:000009">
    <property type="entry name" value="Mitogen-activated protein kinase"/>
    <property type="match status" value="1"/>
</dbReference>
<dbReference type="FunFam" id="3.30.200.20:FF:000210">
    <property type="entry name" value="Mitogen-activated protein kinase"/>
    <property type="match status" value="1"/>
</dbReference>
<dbReference type="Gene3D" id="3.30.200.20">
    <property type="entry name" value="Phosphorylase Kinase, domain 1"/>
    <property type="match status" value="1"/>
</dbReference>
<dbReference type="Gene3D" id="1.10.510.10">
    <property type="entry name" value="Transferase(Phosphotransferase) domain 1"/>
    <property type="match status" value="1"/>
</dbReference>
<dbReference type="InterPro" id="IPR011009">
    <property type="entry name" value="Kinase-like_dom_sf"/>
</dbReference>
<dbReference type="InterPro" id="IPR050117">
    <property type="entry name" value="MAP_kinase"/>
</dbReference>
<dbReference type="InterPro" id="IPR003527">
    <property type="entry name" value="MAP_kinase_CS"/>
</dbReference>
<dbReference type="InterPro" id="IPR008351">
    <property type="entry name" value="MAPK_JNK"/>
</dbReference>
<dbReference type="InterPro" id="IPR000719">
    <property type="entry name" value="Prot_kinase_dom"/>
</dbReference>
<dbReference type="InterPro" id="IPR008271">
    <property type="entry name" value="Ser/Thr_kinase_AS"/>
</dbReference>
<dbReference type="PANTHER" id="PTHR24055">
    <property type="entry name" value="MITOGEN-ACTIVATED PROTEIN KINASE"/>
    <property type="match status" value="1"/>
</dbReference>
<dbReference type="Pfam" id="PF00069">
    <property type="entry name" value="Pkinase"/>
    <property type="match status" value="1"/>
</dbReference>
<dbReference type="PRINTS" id="PR01772">
    <property type="entry name" value="JNKMAPKINASE"/>
</dbReference>
<dbReference type="SMART" id="SM00220">
    <property type="entry name" value="S_TKc"/>
    <property type="match status" value="1"/>
</dbReference>
<dbReference type="SUPFAM" id="SSF56112">
    <property type="entry name" value="Protein kinase-like (PK-like)"/>
    <property type="match status" value="1"/>
</dbReference>
<dbReference type="PROSITE" id="PS01351">
    <property type="entry name" value="MAPK"/>
    <property type="match status" value="1"/>
</dbReference>
<dbReference type="PROSITE" id="PS50011">
    <property type="entry name" value="PROTEIN_KINASE_DOM"/>
    <property type="match status" value="1"/>
</dbReference>
<dbReference type="PROSITE" id="PS00108">
    <property type="entry name" value="PROTEIN_KINASE_ST"/>
    <property type="match status" value="1"/>
</dbReference>
<organism evidence="6">
    <name type="scientific">Suberites domuncula</name>
    <name type="common">Sponge</name>
    <dbReference type="NCBI Taxonomy" id="55567"/>
    <lineage>
        <taxon>Eukaryota</taxon>
        <taxon>Metazoa</taxon>
        <taxon>Porifera</taxon>
        <taxon>Demospongiae</taxon>
        <taxon>Heteroscleromorpha</taxon>
        <taxon>Suberitida</taxon>
        <taxon>Suberitidae</taxon>
        <taxon>Suberites</taxon>
    </lineage>
</organism>
<accession>Q966Y3</accession>
<accession>Q8I1N5</accession>